<evidence type="ECO:0000269" key="1">
    <source>
    </source>
</evidence>
<evidence type="ECO:0000269" key="2">
    <source>
    </source>
</evidence>
<evidence type="ECO:0000305" key="3"/>
<accession>P28041</accession>
<proteinExistence type="evidence at protein level"/>
<comment type="function">
    <text>Alpha-amylase/trypsin inhibitor. It could be involved in insect defense mechanisms.</text>
</comment>
<comment type="subunit">
    <text>Heterotetramer of one CMa, one CMb and two CMd chains.</text>
</comment>
<comment type="subcellular location">
    <subcellularLocation>
        <location>Secreted</location>
    </subcellularLocation>
</comment>
<comment type="tissue specificity">
    <text>Endosperm.</text>
</comment>
<comment type="PTM">
    <text evidence="3">Five disulfide bonds, which are essential for the inhibitor activity, are probably present.</text>
</comment>
<comment type="similarity">
    <text evidence="3">Belongs to the protease inhibitor I6 (cereal trypsin/alpha-amylase inhibitor) family.</text>
</comment>
<organism>
    <name type="scientific">Hordeum vulgare</name>
    <name type="common">Barley</name>
    <dbReference type="NCBI Taxonomy" id="4513"/>
    <lineage>
        <taxon>Eukaryota</taxon>
        <taxon>Viridiplantae</taxon>
        <taxon>Streptophyta</taxon>
        <taxon>Embryophyta</taxon>
        <taxon>Tracheophyta</taxon>
        <taxon>Spermatophyta</taxon>
        <taxon>Magnoliopsida</taxon>
        <taxon>Liliopsida</taxon>
        <taxon>Poales</taxon>
        <taxon>Poaceae</taxon>
        <taxon>BOP clade</taxon>
        <taxon>Pooideae</taxon>
        <taxon>Triticodae</taxon>
        <taxon>Triticeae</taxon>
        <taxon>Hordeinae</taxon>
        <taxon>Hordeum</taxon>
    </lineage>
</organism>
<name>IAAA_HORVU</name>
<dbReference type="EMBL" id="X69937">
    <property type="protein sequence ID" value="CAA49555.1"/>
    <property type="molecule type" value="mRNA"/>
</dbReference>
<dbReference type="EMBL" id="X59264">
    <property type="protein sequence ID" value="CAA41956.1"/>
    <property type="molecule type" value="mRNA"/>
</dbReference>
<dbReference type="PIR" id="S39560">
    <property type="entry name" value="S39560"/>
</dbReference>
<dbReference type="SMR" id="P28041"/>
<dbReference type="MEROPS" id="I06.004"/>
<dbReference type="ExpressionAtlas" id="P28041">
    <property type="expression patterns" value="baseline and differential"/>
</dbReference>
<dbReference type="GO" id="GO:0005576">
    <property type="term" value="C:extracellular region"/>
    <property type="evidence" value="ECO:0007669"/>
    <property type="project" value="UniProtKB-SubCell"/>
</dbReference>
<dbReference type="GO" id="GO:0015066">
    <property type="term" value="F:alpha-amylase inhibitor activity"/>
    <property type="evidence" value="ECO:0007669"/>
    <property type="project" value="UniProtKB-KW"/>
</dbReference>
<dbReference type="GO" id="GO:0004867">
    <property type="term" value="F:serine-type endopeptidase inhibitor activity"/>
    <property type="evidence" value="ECO:0007669"/>
    <property type="project" value="UniProtKB-KW"/>
</dbReference>
<dbReference type="CDD" id="cd00261">
    <property type="entry name" value="AAI_SS"/>
    <property type="match status" value="1"/>
</dbReference>
<dbReference type="Gene3D" id="1.10.110.10">
    <property type="entry name" value="Plant lipid-transfer and hydrophobic proteins"/>
    <property type="match status" value="1"/>
</dbReference>
<dbReference type="InterPro" id="IPR006106">
    <property type="entry name" value="Allergen/soft/tryp_amyl_inhib"/>
</dbReference>
<dbReference type="InterPro" id="IPR006105">
    <property type="entry name" value="Allergen/tryp_amyl_inhib_CS"/>
</dbReference>
<dbReference type="InterPro" id="IPR036312">
    <property type="entry name" value="Bifun_inhib/LTP/seed_sf"/>
</dbReference>
<dbReference type="InterPro" id="IPR016140">
    <property type="entry name" value="Bifunc_inhib/LTP/seed_store"/>
</dbReference>
<dbReference type="PANTHER" id="PTHR34481:SF12">
    <property type="entry name" value="ALPHA-AMYLASE_TRYPSIN INHIBITOR CM2"/>
    <property type="match status" value="1"/>
</dbReference>
<dbReference type="PANTHER" id="PTHR34481">
    <property type="entry name" value="TRYPSIN/FACTOR XIIA INHIBITOR-RELATED"/>
    <property type="match status" value="1"/>
</dbReference>
<dbReference type="Pfam" id="PF00234">
    <property type="entry name" value="Tryp_alpha_amyl"/>
    <property type="match status" value="1"/>
</dbReference>
<dbReference type="PRINTS" id="PR00808">
    <property type="entry name" value="AMLASEINHBTR"/>
</dbReference>
<dbReference type="SMART" id="SM00499">
    <property type="entry name" value="AAI"/>
    <property type="match status" value="1"/>
</dbReference>
<dbReference type="SUPFAM" id="SSF47699">
    <property type="entry name" value="Bifunctional inhibitor/lipid-transfer protein/seed storage 2S albumin"/>
    <property type="match status" value="1"/>
</dbReference>
<dbReference type="PROSITE" id="PS00426">
    <property type="entry name" value="CEREAL_TRYP_AMYL_INH"/>
    <property type="match status" value="1"/>
</dbReference>
<protein>
    <recommendedName>
        <fullName>Alpha-amylase/trypsin inhibitor CMa</fullName>
    </recommendedName>
    <alternativeName>
        <fullName>Chloroform/methanol-soluble protein CMa</fullName>
    </alternativeName>
</protein>
<sequence>MASKSSITPLLLAAVLASVFAAATATGQYCYAGMGLPSNPLEGCREYVAQQTCGVTIAGSPVSSEPGDTPKDRCCQELDEAPQHCRCEAVRYFIGRRSHPDWSVLKDLPGCPKEPQRDFAKVLVTPGQCNVLTVHNAPYCLGLDI</sequence>
<reference key="1">
    <citation type="journal article" date="1993" name="Plant Mol. Biol.">
        <title>Cloning of cDNA, expression, and chromosomal location of genes encoding the three types of subunits of the barley tetrameric inhibitor of insect alpha-amylase.</title>
        <authorList>
            <person name="Medina-Alcazar J."/>
            <person name="Hueros G."/>
            <person name="Carbonero P."/>
        </authorList>
    </citation>
    <scope>NUCLEOTIDE SEQUENCE [MRNA]</scope>
    <source>
        <strain>cv. Abyssinian</strain>
        <tissue>Endosperm</tissue>
    </source>
</reference>
<reference key="2">
    <citation type="journal article" date="1992" name="Plant Mol. Biol.">
        <title>Nucleotide sequence of a cDNA coding for the barley seed protein CMa: an inhibitor of insect alpha-amylase.</title>
        <authorList>
            <person name="Rasmussen S.K."/>
            <person name="Johansson A."/>
        </authorList>
    </citation>
    <scope>NUCLEOTIDE SEQUENCE [MRNA]</scope>
    <source>
        <strain>cv. Bomi</strain>
        <tissue>Seed</tissue>
    </source>
</reference>
<reference key="3">
    <citation type="journal article" date="1986" name="Biochim. Biophys. Acta">
        <title>New alpha-amylase and trypsin inhibitors among the CM-proteins of barley (Hordeum vulgare).</title>
        <authorList>
            <person name="Barber D."/>
            <person name="Sanchez-Monge R."/>
            <person name="Mendez E."/>
            <person name="Lazaro A."/>
            <person name="Garcia-Olmedo F."/>
            <person name="Salcedo G."/>
        </authorList>
    </citation>
    <scope>PROTEIN SEQUENCE OF 26-47</scope>
</reference>
<reference key="4">
    <citation type="journal article" date="1993" name="Electrophoresis">
        <title>Separation of acidic barley endosperm proteins by two-dimensional electrophoresis.</title>
        <authorList>
            <person name="Flengsrud R."/>
        </authorList>
    </citation>
    <scope>PROTEIN SEQUENCE OF 26-47</scope>
    <source>
        <strain>cv. H354-295-2-5</strain>
        <tissue>Starchy endosperm</tissue>
    </source>
</reference>
<gene>
    <name type="primary">IAT1</name>
</gene>
<feature type="signal peptide" evidence="1 2">
    <location>
        <begin position="1"/>
        <end position="25"/>
    </location>
</feature>
<feature type="chain" id="PRO_0000014350" description="Alpha-amylase/trypsin inhibitor CMa">
    <location>
        <begin position="26"/>
        <end position="145"/>
    </location>
</feature>
<feature type="sequence conflict" description="In Ref. 2; CAA41956." evidence="3" ref="2">
    <original>T</original>
    <variation>A</variation>
    <location>
        <position position="24"/>
    </location>
</feature>
<feature type="sequence conflict" description="In Ref. 2; CAA41956." evidence="3" ref="2">
    <original>EA</original>
    <variation>R</variation>
    <location>
        <begin position="88"/>
        <end position="89"/>
    </location>
</feature>
<feature type="sequence conflict" description="In Ref. 2; CAA41956." evidence="3" ref="2">
    <original>S</original>
    <variation>R</variation>
    <location>
        <position position="103"/>
    </location>
</feature>
<keyword id="KW-0022">Alpha-amylase inhibitor</keyword>
<keyword id="KW-0903">Direct protein sequencing</keyword>
<keyword id="KW-1015">Disulfide bond</keyword>
<keyword id="KW-0646">Protease inhibitor</keyword>
<keyword id="KW-0964">Secreted</keyword>
<keyword id="KW-0722">Serine protease inhibitor</keyword>
<keyword id="KW-0732">Signal</keyword>